<name>CLPP2_PARXL</name>
<sequence>MTFRAQMLDTLTSQSSRDLEAQALGLVPIVVETSGRGERSYDIYSRLLKERIVFLVGEVNDQTANLVVAQMLFLESENPDKDISFYINSPGGSVSAGMAIYDTMQFIKPDVSTLCMGLAASMGAFLLAAGAKGKRFALPNSRVMIHQPLGGARGQASDIEIQAREILYLKERLNHLLAHHTGQPVERIARDTDRDNFMSGDDAQAYGLVDQVAHKRP</sequence>
<comment type="function">
    <text evidence="1">Cleaves peptides in various proteins in a process that requires ATP hydrolysis. Has a chymotrypsin-like activity. Plays a major role in the degradation of misfolded proteins.</text>
</comment>
<comment type="catalytic activity">
    <reaction evidence="1">
        <text>Hydrolysis of proteins to small peptides in the presence of ATP and magnesium. alpha-casein is the usual test substrate. In the absence of ATP, only oligopeptides shorter than five residues are hydrolyzed (such as succinyl-Leu-Tyr-|-NHMec, and Leu-Tyr-Leu-|-Tyr-Trp, in which cleavage of the -Tyr-|-Leu- and -Tyr-|-Trp bonds also occurs).</text>
        <dbReference type="EC" id="3.4.21.92"/>
    </reaction>
</comment>
<comment type="subunit">
    <text evidence="1">Fourteen ClpP subunits assemble into 2 heptameric rings which stack back to back to give a disk-like structure with a central cavity, resembling the structure of eukaryotic proteasomes.</text>
</comment>
<comment type="subcellular location">
    <subcellularLocation>
        <location evidence="1">Cytoplasm</location>
    </subcellularLocation>
</comment>
<comment type="similarity">
    <text evidence="1">Belongs to the peptidase S14 family.</text>
</comment>
<proteinExistence type="inferred from homology"/>
<accession>Q13Z15</accession>
<protein>
    <recommendedName>
        <fullName evidence="1">ATP-dependent Clp protease proteolytic subunit 2</fullName>
        <ecNumber evidence="1">3.4.21.92</ecNumber>
    </recommendedName>
    <alternativeName>
        <fullName evidence="1">Endopeptidase Clp 2</fullName>
    </alternativeName>
</protein>
<gene>
    <name evidence="1" type="primary">clpP2</name>
    <name type="ordered locus">Bxeno_A2136</name>
    <name type="ORF">Bxe_A2295</name>
</gene>
<dbReference type="EC" id="3.4.21.92" evidence="1"/>
<dbReference type="EMBL" id="CP000270">
    <property type="protein sequence ID" value="ABE30674.1"/>
    <property type="molecule type" value="Genomic_DNA"/>
</dbReference>
<dbReference type="SMR" id="Q13Z15"/>
<dbReference type="STRING" id="266265.Bxe_A2295"/>
<dbReference type="MEROPS" id="S14.001"/>
<dbReference type="KEGG" id="bxb:DR64_4446"/>
<dbReference type="KEGG" id="bxe:Bxe_A2295"/>
<dbReference type="eggNOG" id="COG0740">
    <property type="taxonomic scope" value="Bacteria"/>
</dbReference>
<dbReference type="OrthoDB" id="9802800at2"/>
<dbReference type="Proteomes" id="UP000001817">
    <property type="component" value="Chromosome 1"/>
</dbReference>
<dbReference type="GO" id="GO:0005737">
    <property type="term" value="C:cytoplasm"/>
    <property type="evidence" value="ECO:0007669"/>
    <property type="project" value="UniProtKB-SubCell"/>
</dbReference>
<dbReference type="GO" id="GO:0009368">
    <property type="term" value="C:endopeptidase Clp complex"/>
    <property type="evidence" value="ECO:0007669"/>
    <property type="project" value="TreeGrafter"/>
</dbReference>
<dbReference type="GO" id="GO:0004176">
    <property type="term" value="F:ATP-dependent peptidase activity"/>
    <property type="evidence" value="ECO:0007669"/>
    <property type="project" value="InterPro"/>
</dbReference>
<dbReference type="GO" id="GO:0051117">
    <property type="term" value="F:ATPase binding"/>
    <property type="evidence" value="ECO:0007669"/>
    <property type="project" value="TreeGrafter"/>
</dbReference>
<dbReference type="GO" id="GO:0004252">
    <property type="term" value="F:serine-type endopeptidase activity"/>
    <property type="evidence" value="ECO:0007669"/>
    <property type="project" value="UniProtKB-UniRule"/>
</dbReference>
<dbReference type="GO" id="GO:0006515">
    <property type="term" value="P:protein quality control for misfolded or incompletely synthesized proteins"/>
    <property type="evidence" value="ECO:0007669"/>
    <property type="project" value="TreeGrafter"/>
</dbReference>
<dbReference type="CDD" id="cd07017">
    <property type="entry name" value="S14_ClpP_2"/>
    <property type="match status" value="1"/>
</dbReference>
<dbReference type="FunFam" id="3.90.226.10:FF:000001">
    <property type="entry name" value="ATP-dependent Clp protease proteolytic subunit"/>
    <property type="match status" value="1"/>
</dbReference>
<dbReference type="Gene3D" id="3.90.226.10">
    <property type="entry name" value="2-enoyl-CoA Hydratase, Chain A, domain 1"/>
    <property type="match status" value="1"/>
</dbReference>
<dbReference type="HAMAP" id="MF_00444">
    <property type="entry name" value="ClpP"/>
    <property type="match status" value="1"/>
</dbReference>
<dbReference type="InterPro" id="IPR001907">
    <property type="entry name" value="ClpP"/>
</dbReference>
<dbReference type="InterPro" id="IPR029045">
    <property type="entry name" value="ClpP/crotonase-like_dom_sf"/>
</dbReference>
<dbReference type="InterPro" id="IPR023562">
    <property type="entry name" value="ClpP/TepA"/>
</dbReference>
<dbReference type="InterPro" id="IPR033135">
    <property type="entry name" value="ClpP_His_AS"/>
</dbReference>
<dbReference type="InterPro" id="IPR018215">
    <property type="entry name" value="ClpP_Ser_AS"/>
</dbReference>
<dbReference type="NCBIfam" id="TIGR00493">
    <property type="entry name" value="clpP"/>
    <property type="match status" value="1"/>
</dbReference>
<dbReference type="NCBIfam" id="NF001368">
    <property type="entry name" value="PRK00277.1"/>
    <property type="match status" value="1"/>
</dbReference>
<dbReference type="NCBIfam" id="NF009205">
    <property type="entry name" value="PRK12553.1"/>
    <property type="match status" value="1"/>
</dbReference>
<dbReference type="PANTHER" id="PTHR10381">
    <property type="entry name" value="ATP-DEPENDENT CLP PROTEASE PROTEOLYTIC SUBUNIT"/>
    <property type="match status" value="1"/>
</dbReference>
<dbReference type="PANTHER" id="PTHR10381:SF70">
    <property type="entry name" value="ATP-DEPENDENT CLP PROTEASE PROTEOLYTIC SUBUNIT"/>
    <property type="match status" value="1"/>
</dbReference>
<dbReference type="Pfam" id="PF00574">
    <property type="entry name" value="CLP_protease"/>
    <property type="match status" value="1"/>
</dbReference>
<dbReference type="PRINTS" id="PR00127">
    <property type="entry name" value="CLPPROTEASEP"/>
</dbReference>
<dbReference type="SUPFAM" id="SSF52096">
    <property type="entry name" value="ClpP/crotonase"/>
    <property type="match status" value="1"/>
</dbReference>
<dbReference type="PROSITE" id="PS00382">
    <property type="entry name" value="CLP_PROTEASE_HIS"/>
    <property type="match status" value="1"/>
</dbReference>
<dbReference type="PROSITE" id="PS00381">
    <property type="entry name" value="CLP_PROTEASE_SER"/>
    <property type="match status" value="1"/>
</dbReference>
<evidence type="ECO:0000255" key="1">
    <source>
        <dbReference type="HAMAP-Rule" id="MF_00444"/>
    </source>
</evidence>
<organism>
    <name type="scientific">Paraburkholderia xenovorans (strain LB400)</name>
    <dbReference type="NCBI Taxonomy" id="266265"/>
    <lineage>
        <taxon>Bacteria</taxon>
        <taxon>Pseudomonadati</taxon>
        <taxon>Pseudomonadota</taxon>
        <taxon>Betaproteobacteria</taxon>
        <taxon>Burkholderiales</taxon>
        <taxon>Burkholderiaceae</taxon>
        <taxon>Paraburkholderia</taxon>
    </lineage>
</organism>
<keyword id="KW-0963">Cytoplasm</keyword>
<keyword id="KW-0378">Hydrolase</keyword>
<keyword id="KW-0645">Protease</keyword>
<keyword id="KW-1185">Reference proteome</keyword>
<keyword id="KW-0720">Serine protease</keyword>
<reference key="1">
    <citation type="journal article" date="2006" name="Proc. Natl. Acad. Sci. U.S.A.">
        <title>Burkholderia xenovorans LB400 harbors a multi-replicon, 9.73-Mbp genome shaped for versatility.</title>
        <authorList>
            <person name="Chain P.S.G."/>
            <person name="Denef V.J."/>
            <person name="Konstantinidis K.T."/>
            <person name="Vergez L.M."/>
            <person name="Agullo L."/>
            <person name="Reyes V.L."/>
            <person name="Hauser L."/>
            <person name="Cordova M."/>
            <person name="Gomez L."/>
            <person name="Gonzalez M."/>
            <person name="Land M."/>
            <person name="Lao V."/>
            <person name="Larimer F."/>
            <person name="LiPuma J.J."/>
            <person name="Mahenthiralingam E."/>
            <person name="Malfatti S.A."/>
            <person name="Marx C.J."/>
            <person name="Parnell J.J."/>
            <person name="Ramette A."/>
            <person name="Richardson P."/>
            <person name="Seeger M."/>
            <person name="Smith D."/>
            <person name="Spilker T."/>
            <person name="Sul W.J."/>
            <person name="Tsoi T.V."/>
            <person name="Ulrich L.E."/>
            <person name="Zhulin I.B."/>
            <person name="Tiedje J.M."/>
        </authorList>
    </citation>
    <scope>NUCLEOTIDE SEQUENCE [LARGE SCALE GENOMIC DNA]</scope>
    <source>
        <strain>LB400</strain>
    </source>
</reference>
<feature type="chain" id="PRO_0000252809" description="ATP-dependent Clp protease proteolytic subunit 2">
    <location>
        <begin position="1"/>
        <end position="217"/>
    </location>
</feature>
<feature type="active site" description="Nucleophile" evidence="1">
    <location>
        <position position="121"/>
    </location>
</feature>
<feature type="active site" evidence="1">
    <location>
        <position position="146"/>
    </location>
</feature>